<proteinExistence type="evidence at transcript level"/>
<organism>
    <name type="scientific">Mus musculus</name>
    <name type="common">Mouse</name>
    <dbReference type="NCBI Taxonomy" id="10090"/>
    <lineage>
        <taxon>Eukaryota</taxon>
        <taxon>Metazoa</taxon>
        <taxon>Chordata</taxon>
        <taxon>Craniata</taxon>
        <taxon>Vertebrata</taxon>
        <taxon>Euteleostomi</taxon>
        <taxon>Mammalia</taxon>
        <taxon>Eutheria</taxon>
        <taxon>Euarchontoglires</taxon>
        <taxon>Glires</taxon>
        <taxon>Rodentia</taxon>
        <taxon>Myomorpha</taxon>
        <taxon>Muroidea</taxon>
        <taxon>Muridae</taxon>
        <taxon>Murinae</taxon>
        <taxon>Mus</taxon>
        <taxon>Mus</taxon>
    </lineage>
</organism>
<accession>Q8BKX7</accession>
<accession>Q8BWB3</accession>
<accession>Q8BZZ7</accession>
<accession>Q8R5L2</accession>
<accession>Q8VDL2</accession>
<protein>
    <recommendedName>
        <fullName>Zinc finger protein 410</fullName>
    </recommendedName>
    <alternativeName>
        <fullName evidence="5">Another partner for ARF 1</fullName>
    </alternativeName>
</protein>
<gene>
    <name evidence="10" type="primary">Znf410</name>
    <name evidence="5" type="synonym">Apa1</name>
    <name evidence="10" type="synonym">D12Ertd748e</name>
    <name evidence="10" type="synonym">Zfp410</name>
</gene>
<reference key="1">
    <citation type="journal article" date="2002" name="Mol. Cell. Biol.">
        <title>Induction of extracellular matrix-remodeling genes by the senescence-associated protein APA-1.</title>
        <authorList>
            <person name="Benanti J.A."/>
            <person name="Williams D.K."/>
            <person name="Robinson K.L."/>
            <person name="Ozer H.L."/>
            <person name="Galloway D.A."/>
        </authorList>
    </citation>
    <scope>NUCLEOTIDE SEQUENCE [MRNA] (ISOFORM 1)</scope>
    <source>
        <strain>C57BL/6J</strain>
        <tissue>Embryo</tissue>
    </source>
</reference>
<reference key="2">
    <citation type="journal article" date="2005" name="Science">
        <title>The transcriptional landscape of the mammalian genome.</title>
        <authorList>
            <person name="Carninci P."/>
            <person name="Kasukawa T."/>
            <person name="Katayama S."/>
            <person name="Gough J."/>
            <person name="Frith M.C."/>
            <person name="Maeda N."/>
            <person name="Oyama R."/>
            <person name="Ravasi T."/>
            <person name="Lenhard B."/>
            <person name="Wells C."/>
            <person name="Kodzius R."/>
            <person name="Shimokawa K."/>
            <person name="Bajic V.B."/>
            <person name="Brenner S.E."/>
            <person name="Batalov S."/>
            <person name="Forrest A.R."/>
            <person name="Zavolan M."/>
            <person name="Davis M.J."/>
            <person name="Wilming L.G."/>
            <person name="Aidinis V."/>
            <person name="Allen J.E."/>
            <person name="Ambesi-Impiombato A."/>
            <person name="Apweiler R."/>
            <person name="Aturaliya R.N."/>
            <person name="Bailey T.L."/>
            <person name="Bansal M."/>
            <person name="Baxter L."/>
            <person name="Beisel K.W."/>
            <person name="Bersano T."/>
            <person name="Bono H."/>
            <person name="Chalk A.M."/>
            <person name="Chiu K.P."/>
            <person name="Choudhary V."/>
            <person name="Christoffels A."/>
            <person name="Clutterbuck D.R."/>
            <person name="Crowe M.L."/>
            <person name="Dalla E."/>
            <person name="Dalrymple B.P."/>
            <person name="de Bono B."/>
            <person name="Della Gatta G."/>
            <person name="di Bernardo D."/>
            <person name="Down T."/>
            <person name="Engstrom P."/>
            <person name="Fagiolini M."/>
            <person name="Faulkner G."/>
            <person name="Fletcher C.F."/>
            <person name="Fukushima T."/>
            <person name="Furuno M."/>
            <person name="Futaki S."/>
            <person name="Gariboldi M."/>
            <person name="Georgii-Hemming P."/>
            <person name="Gingeras T.R."/>
            <person name="Gojobori T."/>
            <person name="Green R.E."/>
            <person name="Gustincich S."/>
            <person name="Harbers M."/>
            <person name="Hayashi Y."/>
            <person name="Hensch T.K."/>
            <person name="Hirokawa N."/>
            <person name="Hill D."/>
            <person name="Huminiecki L."/>
            <person name="Iacono M."/>
            <person name="Ikeo K."/>
            <person name="Iwama A."/>
            <person name="Ishikawa T."/>
            <person name="Jakt M."/>
            <person name="Kanapin A."/>
            <person name="Katoh M."/>
            <person name="Kawasawa Y."/>
            <person name="Kelso J."/>
            <person name="Kitamura H."/>
            <person name="Kitano H."/>
            <person name="Kollias G."/>
            <person name="Krishnan S.P."/>
            <person name="Kruger A."/>
            <person name="Kummerfeld S.K."/>
            <person name="Kurochkin I.V."/>
            <person name="Lareau L.F."/>
            <person name="Lazarevic D."/>
            <person name="Lipovich L."/>
            <person name="Liu J."/>
            <person name="Liuni S."/>
            <person name="McWilliam S."/>
            <person name="Madan Babu M."/>
            <person name="Madera M."/>
            <person name="Marchionni L."/>
            <person name="Matsuda H."/>
            <person name="Matsuzawa S."/>
            <person name="Miki H."/>
            <person name="Mignone F."/>
            <person name="Miyake S."/>
            <person name="Morris K."/>
            <person name="Mottagui-Tabar S."/>
            <person name="Mulder N."/>
            <person name="Nakano N."/>
            <person name="Nakauchi H."/>
            <person name="Ng P."/>
            <person name="Nilsson R."/>
            <person name="Nishiguchi S."/>
            <person name="Nishikawa S."/>
            <person name="Nori F."/>
            <person name="Ohara O."/>
            <person name="Okazaki Y."/>
            <person name="Orlando V."/>
            <person name="Pang K.C."/>
            <person name="Pavan W.J."/>
            <person name="Pavesi G."/>
            <person name="Pesole G."/>
            <person name="Petrovsky N."/>
            <person name="Piazza S."/>
            <person name="Reed J."/>
            <person name="Reid J.F."/>
            <person name="Ring B.Z."/>
            <person name="Ringwald M."/>
            <person name="Rost B."/>
            <person name="Ruan Y."/>
            <person name="Salzberg S.L."/>
            <person name="Sandelin A."/>
            <person name="Schneider C."/>
            <person name="Schoenbach C."/>
            <person name="Sekiguchi K."/>
            <person name="Semple C.A."/>
            <person name="Seno S."/>
            <person name="Sessa L."/>
            <person name="Sheng Y."/>
            <person name="Shibata Y."/>
            <person name="Shimada H."/>
            <person name="Shimada K."/>
            <person name="Silva D."/>
            <person name="Sinclair B."/>
            <person name="Sperling S."/>
            <person name="Stupka E."/>
            <person name="Sugiura K."/>
            <person name="Sultana R."/>
            <person name="Takenaka Y."/>
            <person name="Taki K."/>
            <person name="Tammoja K."/>
            <person name="Tan S.L."/>
            <person name="Tang S."/>
            <person name="Taylor M.S."/>
            <person name="Tegner J."/>
            <person name="Teichmann S.A."/>
            <person name="Ueda H.R."/>
            <person name="van Nimwegen E."/>
            <person name="Verardo R."/>
            <person name="Wei C.L."/>
            <person name="Yagi K."/>
            <person name="Yamanishi H."/>
            <person name="Zabarovsky E."/>
            <person name="Zhu S."/>
            <person name="Zimmer A."/>
            <person name="Hide W."/>
            <person name="Bult C."/>
            <person name="Grimmond S.M."/>
            <person name="Teasdale R.D."/>
            <person name="Liu E.T."/>
            <person name="Brusic V."/>
            <person name="Quackenbush J."/>
            <person name="Wahlestedt C."/>
            <person name="Mattick J.S."/>
            <person name="Hume D.A."/>
            <person name="Kai C."/>
            <person name="Sasaki D."/>
            <person name="Tomaru Y."/>
            <person name="Fukuda S."/>
            <person name="Kanamori-Katayama M."/>
            <person name="Suzuki M."/>
            <person name="Aoki J."/>
            <person name="Arakawa T."/>
            <person name="Iida J."/>
            <person name="Imamura K."/>
            <person name="Itoh M."/>
            <person name="Kato T."/>
            <person name="Kawaji H."/>
            <person name="Kawagashira N."/>
            <person name="Kawashima T."/>
            <person name="Kojima M."/>
            <person name="Kondo S."/>
            <person name="Konno H."/>
            <person name="Nakano K."/>
            <person name="Ninomiya N."/>
            <person name="Nishio T."/>
            <person name="Okada M."/>
            <person name="Plessy C."/>
            <person name="Shibata K."/>
            <person name="Shiraki T."/>
            <person name="Suzuki S."/>
            <person name="Tagami M."/>
            <person name="Waki K."/>
            <person name="Watahiki A."/>
            <person name="Okamura-Oho Y."/>
            <person name="Suzuki H."/>
            <person name="Kawai J."/>
            <person name="Hayashizaki Y."/>
        </authorList>
    </citation>
    <scope>NUCLEOTIDE SEQUENCE [LARGE SCALE MRNA] (ISOFORMS 2 AND 3)</scope>
    <source>
        <strain>C57BL/6J</strain>
        <tissue>Embryonic head</tissue>
        <tissue>Embryonic testis</tissue>
    </source>
</reference>
<reference key="3">
    <citation type="journal article" date="2004" name="Genome Res.">
        <title>The status, quality, and expansion of the NIH full-length cDNA project: the Mammalian Gene Collection (MGC).</title>
        <authorList>
            <consortium name="The MGC Project Team"/>
        </authorList>
    </citation>
    <scope>NUCLEOTIDE SEQUENCE [LARGE SCALE MRNA] (ISOFORMS 1 AND 3)</scope>
    <source>
        <strain>C57BL/6J</strain>
        <strain>FVB/N</strain>
        <tissue>Brain</tissue>
        <tissue>Mammary gland</tissue>
    </source>
</reference>
<reference key="4">
    <citation type="journal article" date="2021" name="Nat. Genet.">
        <title>ZNF410 represses fetal globin by singular control of CHD4.</title>
        <authorList>
            <person name="Vinjamur D.S."/>
            <person name="Yao Q."/>
            <person name="Cole M.A."/>
            <person name="McGuckin C."/>
            <person name="Ren C."/>
            <person name="Zeng J."/>
            <person name="Hossain M."/>
            <person name="Luk K."/>
            <person name="Wolfe S.A."/>
            <person name="Pinello L."/>
            <person name="Bauer D.E."/>
        </authorList>
    </citation>
    <scope>FUNCTION</scope>
    <scope>SUBCELLULAR LOCATION</scope>
    <scope>DISRUPTION PHENOTYPE</scope>
</reference>
<feature type="chain" id="PRO_0000047572" description="Zinc finger protein 410">
    <location>
        <begin position="1"/>
        <end position="478"/>
    </location>
</feature>
<feature type="zinc finger region" description="C2H2-type 1" evidence="2">
    <location>
        <begin position="219"/>
        <end position="243"/>
    </location>
</feature>
<feature type="zinc finger region" description="C2H2-type 2" evidence="2">
    <location>
        <begin position="249"/>
        <end position="273"/>
    </location>
</feature>
<feature type="zinc finger region" description="C2H2-type 3" evidence="2">
    <location>
        <begin position="279"/>
        <end position="303"/>
    </location>
</feature>
<feature type="zinc finger region" description="C2H2-type 4" evidence="2">
    <location>
        <begin position="309"/>
        <end position="333"/>
    </location>
</feature>
<feature type="zinc finger region" description="C2H2-type 5" evidence="2">
    <location>
        <begin position="339"/>
        <end position="362"/>
    </location>
</feature>
<feature type="region of interest" description="Disordered" evidence="3">
    <location>
        <begin position="84"/>
        <end position="113"/>
    </location>
</feature>
<feature type="region of interest" description="Disordered" evidence="3">
    <location>
        <begin position="187"/>
        <end position="214"/>
    </location>
</feature>
<feature type="compositionally biased region" description="Polar residues" evidence="3">
    <location>
        <begin position="103"/>
        <end position="113"/>
    </location>
</feature>
<feature type="binding site" evidence="1">
    <location>
        <position position="221"/>
    </location>
    <ligand>
        <name>Zn(2+)</name>
        <dbReference type="ChEBI" id="CHEBI:29105"/>
        <label>1</label>
        <note>structural</note>
    </ligand>
</feature>
<feature type="binding site" evidence="1">
    <location>
        <position position="226"/>
    </location>
    <ligand>
        <name>Zn(2+)</name>
        <dbReference type="ChEBI" id="CHEBI:29105"/>
        <label>1</label>
        <note>structural</note>
    </ligand>
</feature>
<feature type="binding site" evidence="1">
    <location>
        <position position="239"/>
    </location>
    <ligand>
        <name>Zn(2+)</name>
        <dbReference type="ChEBI" id="CHEBI:29105"/>
        <label>1</label>
        <note>structural</note>
    </ligand>
</feature>
<feature type="binding site" evidence="1">
    <location>
        <position position="243"/>
    </location>
    <ligand>
        <name>Zn(2+)</name>
        <dbReference type="ChEBI" id="CHEBI:29105"/>
        <label>1</label>
        <note>structural</note>
    </ligand>
</feature>
<feature type="binding site" evidence="1">
    <location>
        <position position="251"/>
    </location>
    <ligand>
        <name>Zn(2+)</name>
        <dbReference type="ChEBI" id="CHEBI:29105"/>
        <label>2</label>
        <note>structural</note>
    </ligand>
</feature>
<feature type="binding site" evidence="1">
    <location>
        <position position="256"/>
    </location>
    <ligand>
        <name>Zn(2+)</name>
        <dbReference type="ChEBI" id="CHEBI:29105"/>
        <label>2</label>
        <note>structural</note>
    </ligand>
</feature>
<feature type="binding site" evidence="1">
    <location>
        <position position="269"/>
    </location>
    <ligand>
        <name>Zn(2+)</name>
        <dbReference type="ChEBI" id="CHEBI:29105"/>
        <label>2</label>
        <note>structural</note>
    </ligand>
</feature>
<feature type="binding site" evidence="1">
    <location>
        <position position="273"/>
    </location>
    <ligand>
        <name>Zn(2+)</name>
        <dbReference type="ChEBI" id="CHEBI:29105"/>
        <label>2</label>
        <note>structural</note>
    </ligand>
</feature>
<feature type="binding site" evidence="1">
    <location>
        <position position="281"/>
    </location>
    <ligand>
        <name>Zn(2+)</name>
        <dbReference type="ChEBI" id="CHEBI:29105"/>
        <label>3</label>
        <note>structural</note>
    </ligand>
</feature>
<feature type="binding site" evidence="1">
    <location>
        <position position="286"/>
    </location>
    <ligand>
        <name>Zn(2+)</name>
        <dbReference type="ChEBI" id="CHEBI:29105"/>
        <label>3</label>
        <note>structural</note>
    </ligand>
</feature>
<feature type="binding site" evidence="1">
    <location>
        <position position="299"/>
    </location>
    <ligand>
        <name>Zn(2+)</name>
        <dbReference type="ChEBI" id="CHEBI:29105"/>
        <label>3</label>
        <note>structural</note>
    </ligand>
</feature>
<feature type="binding site" evidence="1">
    <location>
        <position position="303"/>
    </location>
    <ligand>
        <name>Zn(2+)</name>
        <dbReference type="ChEBI" id="CHEBI:29105"/>
        <label>3</label>
        <note>structural</note>
    </ligand>
</feature>
<feature type="binding site" evidence="1">
    <location>
        <position position="311"/>
    </location>
    <ligand>
        <name>Zn(2+)</name>
        <dbReference type="ChEBI" id="CHEBI:29105"/>
        <label>4</label>
        <note>structural</note>
    </ligand>
</feature>
<feature type="binding site" evidence="1">
    <location>
        <position position="316"/>
    </location>
    <ligand>
        <name>Zn(2+)</name>
        <dbReference type="ChEBI" id="CHEBI:29105"/>
        <label>4</label>
        <note>structural</note>
    </ligand>
</feature>
<feature type="binding site" evidence="1">
    <location>
        <position position="329"/>
    </location>
    <ligand>
        <name>Zn(2+)</name>
        <dbReference type="ChEBI" id="CHEBI:29105"/>
        <label>4</label>
        <note>structural</note>
    </ligand>
</feature>
<feature type="binding site" evidence="1">
    <location>
        <position position="333"/>
    </location>
    <ligand>
        <name>Zn(2+)</name>
        <dbReference type="ChEBI" id="CHEBI:29105"/>
        <label>4</label>
        <note>structural</note>
    </ligand>
</feature>
<feature type="binding site" evidence="1">
    <location>
        <position position="341"/>
    </location>
    <ligand>
        <name>Zn(2+)</name>
        <dbReference type="ChEBI" id="CHEBI:29105"/>
        <label>5</label>
        <note>structural</note>
    </ligand>
</feature>
<feature type="binding site" evidence="1">
    <location>
        <position position="344"/>
    </location>
    <ligand>
        <name>Zn(2+)</name>
        <dbReference type="ChEBI" id="CHEBI:29105"/>
        <label>5</label>
        <note>structural</note>
    </ligand>
</feature>
<feature type="binding site" evidence="1">
    <location>
        <position position="357"/>
    </location>
    <ligand>
        <name>Zn(2+)</name>
        <dbReference type="ChEBI" id="CHEBI:29105"/>
        <label>5</label>
        <note>structural</note>
    </ligand>
</feature>
<feature type="binding site" evidence="1">
    <location>
        <position position="361"/>
    </location>
    <ligand>
        <name>Zn(2+)</name>
        <dbReference type="ChEBI" id="CHEBI:29105"/>
        <label>5</label>
        <note>structural</note>
    </ligand>
</feature>
<feature type="splice variant" id="VSP_008490" description="In isoform 2." evidence="7">
    <original>GEKPHQCQVCGKT</original>
    <variation>GTRTCAICRPQIQ</variation>
    <location>
        <begin position="335"/>
        <end position="347"/>
    </location>
</feature>
<feature type="splice variant" id="VSP_008492" description="In isoform 3." evidence="6 7">
    <original>GEKPHQCQVCG</original>
    <variation>ELEIEPRASRV</variation>
    <location>
        <begin position="335"/>
        <end position="345"/>
    </location>
</feature>
<feature type="splice variant" id="VSP_008493" description="In isoform 3." evidence="6 7">
    <location>
        <begin position="346"/>
        <end position="478"/>
    </location>
</feature>
<feature type="splice variant" id="VSP_008491" description="In isoform 2." evidence="7">
    <location>
        <begin position="348"/>
        <end position="478"/>
    </location>
</feature>
<feature type="sequence conflict" description="In Ref. 1; AAL82191." evidence="8" ref="1">
    <original>R</original>
    <variation>P</variation>
    <location>
        <position position="52"/>
    </location>
</feature>
<feature type="sequence conflict" description="In Ref. 1; AAL82191." evidence="8" ref="1">
    <original>V</original>
    <variation>G</variation>
    <location>
        <position position="141"/>
    </location>
</feature>
<feature type="sequence conflict" description="In Ref. 2; BAC28148." evidence="8" ref="2">
    <original>Q</original>
    <variation>K</variation>
    <location>
        <position position="264"/>
    </location>
</feature>
<feature type="sequence conflict" description="In Ref. 1; AAL82191." evidence="8" ref="1">
    <original>Q</original>
    <variation>P</variation>
    <location>
        <position position="289"/>
    </location>
</feature>
<feature type="sequence conflict" description="In Ref. 1; AAL82191." evidence="8" ref="1">
    <original>G</original>
    <variation>A</variation>
    <location>
        <position position="317"/>
    </location>
</feature>
<keyword id="KW-0010">Activator</keyword>
<keyword id="KW-0025">Alternative splicing</keyword>
<keyword id="KW-0158">Chromosome</keyword>
<keyword id="KW-0238">DNA-binding</keyword>
<keyword id="KW-0325">Glycoprotein</keyword>
<keyword id="KW-0479">Metal-binding</keyword>
<keyword id="KW-0539">Nucleus</keyword>
<keyword id="KW-1185">Reference proteome</keyword>
<keyword id="KW-0677">Repeat</keyword>
<keyword id="KW-0804">Transcription</keyword>
<keyword id="KW-0805">Transcription regulation</keyword>
<keyword id="KW-0832">Ubl conjugation</keyword>
<keyword id="KW-0862">Zinc</keyword>
<keyword id="KW-0863">Zinc-finger</keyword>
<name>ZN410_MOUSE</name>
<evidence type="ECO:0000250" key="1">
    <source>
        <dbReference type="UniProtKB" id="Q86VK4"/>
    </source>
</evidence>
<evidence type="ECO:0000255" key="2">
    <source>
        <dbReference type="PROSITE-ProRule" id="PRU00042"/>
    </source>
</evidence>
<evidence type="ECO:0000256" key="3">
    <source>
        <dbReference type="SAM" id="MobiDB-lite"/>
    </source>
</evidence>
<evidence type="ECO:0000269" key="4">
    <source>
    </source>
</evidence>
<evidence type="ECO:0000303" key="5">
    <source>
    </source>
</evidence>
<evidence type="ECO:0000303" key="6">
    <source>
    </source>
</evidence>
<evidence type="ECO:0000303" key="7">
    <source>
    </source>
</evidence>
<evidence type="ECO:0000305" key="8"/>
<evidence type="ECO:0000305" key="9">
    <source>
    </source>
</evidence>
<evidence type="ECO:0000312" key="10">
    <source>
        <dbReference type="MGI" id="MGI:1289280"/>
    </source>
</evidence>
<comment type="function">
    <text evidence="1 4">Transcription factor that binds to the sequence motif 5'-CATCCCATAATA-3', and is specifically required to silence expression of fetal hemoglobin in adult erythroid cells (PubMed:33859416). Prevents expression of fetal hemoglobin genes HBG1 and HBG2 through CHD4: acts as a direct transcriptional activator of CHD4, a central component of the NuRD complex that represses transcription of fetal hemoglobin genes HBG1 and HBG2 in erythroid cells (PubMed:33859416). May also activate transcription of matrix-remodeling genes such as MMP1 during fibroblast senescence (By similarity). May activate transcription of the gap junction gene GJC1, perhaps in response to increasing glucose (By similarity). However, recent studies suggest that ZNF410 is dedicated to regulate expression of a single gene: CHD4 (By similarity).</text>
</comment>
<comment type="subunit">
    <text evidence="1">Interacts with CDKN2A/p14ARF.</text>
</comment>
<comment type="subcellular location">
    <subcellularLocation>
        <location evidence="9">Nucleus</location>
    </subcellularLocation>
    <subcellularLocation>
        <location evidence="9">Chromosome</location>
    </subcellularLocation>
    <text evidence="9">Directly binds to the sequence motif 5'-CATCCCATAATA-3'.</text>
</comment>
<comment type="alternative products">
    <event type="alternative splicing"/>
    <isoform>
        <id>Q8BKX7-1</id>
        <name>1</name>
        <sequence type="displayed"/>
    </isoform>
    <isoform>
        <id>Q8BKX7-2</id>
        <name>2</name>
        <sequence type="described" ref="VSP_008490 VSP_008491"/>
    </isoform>
    <isoform>
        <id>Q8BKX7-3</id>
        <name>3</name>
        <sequence type="described" ref="VSP_008492 VSP_008493"/>
    </isoform>
</comment>
<comment type="domain">
    <text evidence="1">The five zinc finger domains are necessary and sufficient to bind to DNA.</text>
</comment>
<comment type="PTM">
    <text evidence="1">O-glycosylated. O-GlcNAcylation may occur in response to increasing glucose levels and affect transcription factor activity.</text>
</comment>
<comment type="PTM">
    <text evidence="1">Sumoylated. Sumoylation increases its half-life, possibly by blocking ubiquitin-mediated degradation.</text>
</comment>
<comment type="disruption phenotype">
    <text evidence="4">Mice are viable and healthy, but display reduced expression of Chd4, leading to rerepression of fetal hemoglobin genes Hbg1 and Hbg2.</text>
</comment>
<sequence>MLSDELESKPELLVQFVQNTSIPLGQGLVESEAKDITCLSLLPVTEASECSRLMLPDETPNHANSSKEVPSSAVLRSLQVNVGPDGEETRAQTVQKSPEFLTTPESPSLLQDLQPSDSTSFILLNLTRAGLGSSAEHFVFVQDETEDSGADFLSAESTDSSIPWFLRVQELAHDSLIAATRAQLAKNAKTGSNGENVHLGSGDGQPKDSGPLPQAEKKLKCTVEGCDRTFVWPAHFKYHLKTHRNERSFICPAEGCGKSFYVLQRLKVHMRTHNGEKPFMCHESGCGKQFTTAGNLKNHRRIHTGEKPFLCEAQGCGRSFAEYSSLRKHLVVHSGEKPHQCQVCGKTFSQSGSRNVHMRKHHLQLGTTGSQEQDQTAEPLMGSSLLEDASVPNKNLVSMNSQSSLGGESLNLSNTNSILGVDDEVLTERASRPLSSVPDVTHHLVTMQSGRQSYEVSVLTAVNPQELLNQGDLTERQT</sequence>
<dbReference type="EMBL" id="AF295806">
    <property type="protein sequence ID" value="AAL82191.1"/>
    <property type="molecule type" value="mRNA"/>
</dbReference>
<dbReference type="EMBL" id="AK033090">
    <property type="protein sequence ID" value="BAC28148.1"/>
    <property type="molecule type" value="mRNA"/>
</dbReference>
<dbReference type="EMBL" id="AK053001">
    <property type="protein sequence ID" value="BAC35235.1"/>
    <property type="molecule type" value="mRNA"/>
</dbReference>
<dbReference type="EMBL" id="BC021528">
    <property type="protein sequence ID" value="AAH21528.1"/>
    <property type="molecule type" value="mRNA"/>
</dbReference>
<dbReference type="EMBL" id="BC052080">
    <property type="protein sequence ID" value="AAH52080.1"/>
    <property type="molecule type" value="mRNA"/>
</dbReference>
<dbReference type="CCDS" id="CCDS26042.1">
    <molecule id="Q8BKX7-1"/>
</dbReference>
<dbReference type="CCDS" id="CCDS88368.1">
    <molecule id="Q8BKX7-3"/>
</dbReference>
<dbReference type="CCDS" id="CCDS88369.1">
    <molecule id="Q8BKX7-2"/>
</dbReference>
<dbReference type="RefSeq" id="NP_001239511.1">
    <molecule id="Q8BKX7-2"/>
    <property type="nucleotide sequence ID" value="NM_001252582.1"/>
</dbReference>
<dbReference type="RefSeq" id="NP_001239512.1">
    <molecule id="Q8BKX7-3"/>
    <property type="nucleotide sequence ID" value="NM_001252583.1"/>
</dbReference>
<dbReference type="RefSeq" id="NP_659082.1">
    <molecule id="Q8BKX7-1"/>
    <property type="nucleotide sequence ID" value="NM_144833.3"/>
</dbReference>
<dbReference type="RefSeq" id="XP_006516148.1">
    <property type="nucleotide sequence ID" value="XM_006516085.2"/>
</dbReference>
<dbReference type="RefSeq" id="XP_006516149.1">
    <property type="nucleotide sequence ID" value="XM_006516086.3"/>
</dbReference>
<dbReference type="SMR" id="Q8BKX7"/>
<dbReference type="FunCoup" id="Q8BKX7">
    <property type="interactions" value="3210"/>
</dbReference>
<dbReference type="STRING" id="10090.ENSMUSP00000045550"/>
<dbReference type="iPTMnet" id="Q8BKX7"/>
<dbReference type="PhosphoSitePlus" id="Q8BKX7"/>
<dbReference type="PaxDb" id="10090-ENSMUSP00000045550"/>
<dbReference type="ProteomicsDB" id="275075">
    <molecule id="Q8BKX7-1"/>
</dbReference>
<dbReference type="ProteomicsDB" id="275076">
    <molecule id="Q8BKX7-2"/>
</dbReference>
<dbReference type="ProteomicsDB" id="275077">
    <molecule id="Q8BKX7-3"/>
</dbReference>
<dbReference type="Antibodypedia" id="126">
    <property type="antibodies" value="186 antibodies from 20 providers"/>
</dbReference>
<dbReference type="DNASU" id="52708"/>
<dbReference type="Ensembl" id="ENSMUST00000045931.12">
    <molecule id="Q8BKX7-1"/>
    <property type="protein sequence ID" value="ENSMUSP00000045550.11"/>
    <property type="gene ID" value="ENSMUSG00000042472.12"/>
</dbReference>
<dbReference type="Ensembl" id="ENSMUST00000220931.2">
    <molecule id="Q8BKX7-3"/>
    <property type="protein sequence ID" value="ENSMUSP00000152098.2"/>
    <property type="gene ID" value="ENSMUSG00000042472.12"/>
</dbReference>
<dbReference type="Ensembl" id="ENSMUST00000222258.2">
    <molecule id="Q8BKX7-2"/>
    <property type="protein sequence ID" value="ENSMUSP00000152441.2"/>
    <property type="gene ID" value="ENSMUSG00000042472.12"/>
</dbReference>
<dbReference type="GeneID" id="52708"/>
<dbReference type="KEGG" id="mmu:52708"/>
<dbReference type="UCSC" id="uc007oet.2">
    <molecule id="Q8BKX7-2"/>
    <property type="organism name" value="mouse"/>
</dbReference>
<dbReference type="UCSC" id="uc007oev.2">
    <molecule id="Q8BKX7-1"/>
    <property type="organism name" value="mouse"/>
</dbReference>
<dbReference type="UCSC" id="uc007oew.2">
    <molecule id="Q8BKX7-3"/>
    <property type="organism name" value="mouse"/>
</dbReference>
<dbReference type="AGR" id="MGI:1289280"/>
<dbReference type="CTD" id="52708"/>
<dbReference type="MGI" id="MGI:1289280">
    <property type="gene designation" value="Zfp410"/>
</dbReference>
<dbReference type="VEuPathDB" id="HostDB:ENSMUSG00000042472"/>
<dbReference type="eggNOG" id="KOG1721">
    <property type="taxonomic scope" value="Eukaryota"/>
</dbReference>
<dbReference type="GeneTree" id="ENSGT00940000158098"/>
<dbReference type="HOGENOM" id="CLU_043629_1_0_1"/>
<dbReference type="InParanoid" id="Q8BKX7"/>
<dbReference type="OMA" id="XNDRSFI"/>
<dbReference type="OrthoDB" id="5977959at2759"/>
<dbReference type="PhylomeDB" id="Q8BKX7"/>
<dbReference type="TreeFam" id="TF333498"/>
<dbReference type="BioGRID-ORCS" id="52708">
    <property type="hits" value="2 hits in 78 CRISPR screens"/>
</dbReference>
<dbReference type="ChiTaRS" id="Zfp410">
    <property type="organism name" value="mouse"/>
</dbReference>
<dbReference type="PRO" id="PR:Q8BKX7"/>
<dbReference type="Proteomes" id="UP000000589">
    <property type="component" value="Chromosome 12"/>
</dbReference>
<dbReference type="RNAct" id="Q8BKX7">
    <property type="molecule type" value="protein"/>
</dbReference>
<dbReference type="Bgee" id="ENSMUSG00000042472">
    <property type="expression patterns" value="Expressed in metanephric loop of Henle and 265 other cell types or tissues"/>
</dbReference>
<dbReference type="ExpressionAtlas" id="Q8BKX7">
    <property type="expression patterns" value="baseline and differential"/>
</dbReference>
<dbReference type="GO" id="GO:0005694">
    <property type="term" value="C:chromosome"/>
    <property type="evidence" value="ECO:0007669"/>
    <property type="project" value="UniProtKB-SubCell"/>
</dbReference>
<dbReference type="GO" id="GO:0005634">
    <property type="term" value="C:nucleus"/>
    <property type="evidence" value="ECO:0007669"/>
    <property type="project" value="UniProtKB-SubCell"/>
</dbReference>
<dbReference type="GO" id="GO:0003700">
    <property type="term" value="F:DNA-binding transcription factor activity"/>
    <property type="evidence" value="ECO:0007669"/>
    <property type="project" value="Ensembl"/>
</dbReference>
<dbReference type="GO" id="GO:0000978">
    <property type="term" value="F:RNA polymerase II cis-regulatory region sequence-specific DNA binding"/>
    <property type="evidence" value="ECO:0007669"/>
    <property type="project" value="Ensembl"/>
</dbReference>
<dbReference type="GO" id="GO:0008270">
    <property type="term" value="F:zinc ion binding"/>
    <property type="evidence" value="ECO:0007669"/>
    <property type="project" value="UniProtKB-KW"/>
</dbReference>
<dbReference type="GO" id="GO:0010629">
    <property type="term" value="P:negative regulation of gene expression"/>
    <property type="evidence" value="ECO:0007669"/>
    <property type="project" value="Ensembl"/>
</dbReference>
<dbReference type="GO" id="GO:0045944">
    <property type="term" value="P:positive regulation of transcription by RNA polymerase II"/>
    <property type="evidence" value="ECO:0007669"/>
    <property type="project" value="Ensembl"/>
</dbReference>
<dbReference type="FunFam" id="3.30.160.60:FF:000071">
    <property type="entry name" value="Putative zinc finger protein 143"/>
    <property type="match status" value="1"/>
</dbReference>
<dbReference type="FunFam" id="3.30.160.60:FF:000221">
    <property type="entry name" value="Zinc finger protein 410"/>
    <property type="match status" value="1"/>
</dbReference>
<dbReference type="FunFam" id="3.30.160.60:FF:000462">
    <property type="entry name" value="Zinc finger protein 410"/>
    <property type="match status" value="1"/>
</dbReference>
<dbReference type="FunFam" id="3.30.160.60:FF:000441">
    <property type="entry name" value="zinc finger protein 410 isoform X1"/>
    <property type="match status" value="1"/>
</dbReference>
<dbReference type="Gene3D" id="3.30.160.60">
    <property type="entry name" value="Classic Zinc Finger"/>
    <property type="match status" value="5"/>
</dbReference>
<dbReference type="InterPro" id="IPR051061">
    <property type="entry name" value="Zinc_finger_trans_reg"/>
</dbReference>
<dbReference type="InterPro" id="IPR036236">
    <property type="entry name" value="Znf_C2H2_sf"/>
</dbReference>
<dbReference type="InterPro" id="IPR013087">
    <property type="entry name" value="Znf_C2H2_type"/>
</dbReference>
<dbReference type="PANTHER" id="PTHR46179">
    <property type="entry name" value="ZINC FINGER PROTEIN"/>
    <property type="match status" value="1"/>
</dbReference>
<dbReference type="PANTHER" id="PTHR46179:SF3">
    <property type="entry name" value="ZINC FINGER PROTEIN 410"/>
    <property type="match status" value="1"/>
</dbReference>
<dbReference type="Pfam" id="PF00096">
    <property type="entry name" value="zf-C2H2"/>
    <property type="match status" value="4"/>
</dbReference>
<dbReference type="SMART" id="SM00355">
    <property type="entry name" value="ZnF_C2H2"/>
    <property type="match status" value="5"/>
</dbReference>
<dbReference type="SUPFAM" id="SSF57667">
    <property type="entry name" value="beta-beta-alpha zinc fingers"/>
    <property type="match status" value="3"/>
</dbReference>
<dbReference type="PROSITE" id="PS00028">
    <property type="entry name" value="ZINC_FINGER_C2H2_1"/>
    <property type="match status" value="5"/>
</dbReference>
<dbReference type="PROSITE" id="PS50157">
    <property type="entry name" value="ZINC_FINGER_C2H2_2"/>
    <property type="match status" value="5"/>
</dbReference>